<organism>
    <name type="scientific">Strongylocentrotus purpuratus</name>
    <name type="common">Purple sea urchin</name>
    <dbReference type="NCBI Taxonomy" id="7668"/>
    <lineage>
        <taxon>Eukaryota</taxon>
        <taxon>Metazoa</taxon>
        <taxon>Echinodermata</taxon>
        <taxon>Eleutherozoa</taxon>
        <taxon>Echinozoa</taxon>
        <taxon>Echinoidea</taxon>
        <taxon>Euechinoidea</taxon>
        <taxon>Echinacea</taxon>
        <taxon>Camarodonta</taxon>
        <taxon>Echinidea</taxon>
        <taxon>Strongylocentrotidae</taxon>
        <taxon>Strongylocentrotus</taxon>
    </lineage>
</organism>
<feature type="chain" id="PRO_0000065765" description="Vesicle-associated protein">
    <location>
        <begin position="1" status="less than"/>
        <end position="433" status="greater than"/>
    </location>
</feature>
<feature type="repeat" description="1">
    <location>
        <begin position="112"/>
        <end position="122"/>
    </location>
</feature>
<feature type="repeat" description="2">
    <location>
        <begin position="219"/>
        <end position="229"/>
    </location>
</feature>
<feature type="repeat" description="3">
    <location>
        <begin position="340"/>
        <end position="350"/>
    </location>
</feature>
<feature type="region of interest" description="3 X 11 AA repeats of G-G-G-I-G-G-G-L-G-G-G">
    <location>
        <begin position="112"/>
        <end position="350"/>
    </location>
</feature>
<feature type="region of interest" description="Disordered" evidence="2">
    <location>
        <begin position="366"/>
        <end position="389"/>
    </location>
</feature>
<feature type="region of interest" description="Disordered" evidence="2">
    <location>
        <begin position="411"/>
        <end position="433"/>
    </location>
</feature>
<feature type="short sequence motif" description="Nuclear localization signal" evidence="1">
    <location>
        <begin position="266"/>
        <end position="274"/>
    </location>
</feature>
<feature type="compositionally biased region" description="Basic and acidic residues" evidence="2">
    <location>
        <begin position="423"/>
        <end position="433"/>
    </location>
</feature>
<feature type="non-terminal residue">
    <location>
        <position position="1"/>
    </location>
</feature>
<feature type="non-terminal residue">
    <location>
        <position position="433"/>
    </location>
</feature>
<dbReference type="EMBL" id="X69993">
    <property type="protein sequence ID" value="CAA49608.1"/>
    <property type="molecule type" value="mRNA"/>
</dbReference>
<dbReference type="PIR" id="T01405">
    <property type="entry name" value="T01405"/>
</dbReference>
<dbReference type="STRING" id="7668.Q06155"/>
<dbReference type="eggNOG" id="ENOG502QTQ3">
    <property type="taxonomic scope" value="Eukaryota"/>
</dbReference>
<dbReference type="HOGENOM" id="CLU_224310_0_0_1"/>
<dbReference type="InParanoid" id="Q06155"/>
<dbReference type="Proteomes" id="UP000007110">
    <property type="component" value="Unassembled WGS sequence"/>
</dbReference>
<dbReference type="GO" id="GO:0005789">
    <property type="term" value="C:endoplasmic reticulum membrane"/>
    <property type="evidence" value="ECO:0007669"/>
    <property type="project" value="UniProtKB-SubCell"/>
</dbReference>
<dbReference type="GO" id="GO:0005634">
    <property type="term" value="C:nucleus"/>
    <property type="evidence" value="ECO:0007669"/>
    <property type="project" value="UniProtKB-SubCell"/>
</dbReference>
<dbReference type="GO" id="GO:0003723">
    <property type="term" value="F:RNA binding"/>
    <property type="evidence" value="ECO:0007669"/>
    <property type="project" value="UniProtKB-KW"/>
</dbReference>
<dbReference type="InterPro" id="IPR052082">
    <property type="entry name" value="Myelin_sheath_structural"/>
</dbReference>
<dbReference type="PANTHER" id="PTHR23348:SF16">
    <property type="entry name" value="LEUCINE RICH REPEAT FAMILY PROTEIN"/>
    <property type="match status" value="1"/>
</dbReference>
<dbReference type="PANTHER" id="PTHR23348">
    <property type="entry name" value="PERIAXIN/AHNAK"/>
    <property type="match status" value="1"/>
</dbReference>
<reference key="1">
    <citation type="journal article" date="1992" name="J. Cell Sci.">
        <title>A novel vesicle-associated protein (VAP-1) in sea urchin eggs containing multiple RNA-binding consensus sequences.</title>
        <authorList>
            <person name="Barton N.R."/>
            <person name="Bonder E.M."/>
            <person name="Fishkind D.J."/>
            <person name="Warren R.H."/>
            <person name="Pratt M.M."/>
        </authorList>
    </citation>
    <scope>NUCLEOTIDE SEQUENCE [MRNA]</scope>
    <source>
        <tissue>Embryo</tissue>
    </source>
</reference>
<evidence type="ECO:0000255" key="1"/>
<evidence type="ECO:0000256" key="2">
    <source>
        <dbReference type="SAM" id="MobiDB-lite"/>
    </source>
</evidence>
<evidence type="ECO:0000305" key="3"/>
<comment type="function">
    <text>May function as a multidomain RNA-binding protein. May play a role in nuclear RNA processing and in early development.</text>
</comment>
<comment type="subcellular location">
    <subcellularLocation>
        <location>Microsome membrane</location>
        <topology>Peripheral membrane protein</topology>
    </subcellularLocation>
    <subcellularLocation>
        <location evidence="3">Nucleus</location>
    </subcellularLocation>
    <subcellularLocation>
        <location>Endoplasmic reticulum membrane</location>
        <topology>Peripheral membrane protein</topology>
    </subcellularLocation>
    <text>Initially a peripheral membrane protein associated with the microsomal membrane fractions. May be targeted to the nucleus later in development.</text>
</comment>
<comment type="tissue specificity">
    <text>Egg cortex.</text>
</comment>
<accession>Q06155</accession>
<sequence>TDIGGGLDVGGGLRGGLDIDAKGPDVDIKGPKVGGDISGPDLDVSGPDLDIDGGGKKGKGGFGFGLKMPKFGFGGHGKGDIDVDADVDIERPDLDVSGDADLPSGGVGLDVGGGIGGGLGGGLDIDANGPDVDIKGPKVGGDISGPDLDVSGPDLDIDVDGKKKGKGGFGFGMKMPKFGFGGHGKGDIDVDADVDIERPDLDVSGDADLPSGGVGLDVGGGIGGGLGGGLDIDANGPDVDIKGPKVGGDISGPDLDVSGPDLDIDVDGKKKGKGGFGFGLKIPKFMDPTFGFGGHGKGDIDVDADGGVVIPEGDIKVKTGKPDIGGDVDLPSGGVDLDVGGGIGGGLGGGLDIDAKGPDVDIKGPRVGGDISGPDLDVSGPDLDIDGDGKKKGKGGFGFGLKMPKFGFGGHGKGDIDVDADVDIERPDLNVSG</sequence>
<proteinExistence type="evidence at transcript level"/>
<gene>
    <name type="primary">VAP-1</name>
</gene>
<name>VAP1_STRPU</name>
<keyword id="KW-0217">Developmental protein</keyword>
<keyword id="KW-0256">Endoplasmic reticulum</keyword>
<keyword id="KW-0472">Membrane</keyword>
<keyword id="KW-0492">Microsome</keyword>
<keyword id="KW-0539">Nucleus</keyword>
<keyword id="KW-1185">Reference proteome</keyword>
<keyword id="KW-0677">Repeat</keyword>
<keyword id="KW-0694">RNA-binding</keyword>
<protein>
    <recommendedName>
        <fullName>Vesicle-associated protein</fullName>
    </recommendedName>
    <alternativeName>
        <fullName>VAP-1</fullName>
    </alternativeName>
</protein>